<feature type="chain" id="PRO_0000377562" description="Bifunctional helicase and thymine dioxygenase JBP2">
    <location>
        <begin position="1"/>
        <end position="1077"/>
    </location>
</feature>
<feature type="domain" description="Helicase ATP-binding" evidence="2">
    <location>
        <begin position="531"/>
        <end position="706"/>
    </location>
</feature>
<feature type="domain" description="Helicase C-terminal" evidence="3">
    <location>
        <begin position="871"/>
        <end position="1032"/>
    </location>
</feature>
<feature type="region of interest" description="Thymine dioxygenase">
    <location>
        <begin position="1"/>
        <end position="516"/>
    </location>
</feature>
<feature type="region of interest" description="DNA Helicase">
    <location>
        <begin position="517"/>
        <end position="1075"/>
    </location>
</feature>
<feature type="short sequence motif" description="DEAH box">
    <location>
        <begin position="657"/>
        <end position="660"/>
    </location>
</feature>
<feature type="binding site" evidence="1">
    <location>
        <position position="391"/>
    </location>
    <ligand>
        <name>Fe cation</name>
        <dbReference type="ChEBI" id="CHEBI:24875"/>
        <note>catalytic; for thymine dioxygenase activity</note>
    </ligand>
</feature>
<feature type="binding site" evidence="1">
    <location>
        <position position="393"/>
    </location>
    <ligand>
        <name>Fe cation</name>
        <dbReference type="ChEBI" id="CHEBI:24875"/>
        <note>catalytic; for thymine dioxygenase activity</note>
    </ligand>
</feature>
<feature type="binding site" evidence="1">
    <location>
        <position position="441"/>
    </location>
    <ligand>
        <name>Fe cation</name>
        <dbReference type="ChEBI" id="CHEBI:24875"/>
        <note>catalytic; for thymine dioxygenase activity</note>
    </ligand>
</feature>
<feature type="binding site" evidence="1">
    <location>
        <position position="455"/>
    </location>
    <ligand>
        <name>2-oxoglutarate</name>
        <dbReference type="ChEBI" id="CHEBI:16810"/>
    </ligand>
</feature>
<feature type="binding site" evidence="2">
    <location>
        <begin position="544"/>
        <end position="551"/>
    </location>
    <ligand>
        <name>ATP</name>
        <dbReference type="ChEBI" id="CHEBI:30616"/>
    </ligand>
</feature>
<feature type="mutagenesis site" description="Impairs DNA base J biosynthesis." evidence="6">
    <original>H</original>
    <variation>A</variation>
    <location>
        <position position="391"/>
    </location>
</feature>
<feature type="mutagenesis site" description="Induces a slight reduction in DNA base J biosynthesis." evidence="6">
    <original>D</original>
    <variation>A</variation>
    <location>
        <position position="393"/>
    </location>
</feature>
<feature type="mutagenesis site" description="Impairs DNA base J biosynthesis." evidence="6">
    <original>H</original>
    <variation>A</variation>
    <location>
        <position position="441"/>
    </location>
</feature>
<feature type="mutagenesis site" description="Impairs DNA base J biosynthesis." evidence="6">
    <original>R</original>
    <variation>A</variation>
    <location>
        <position position="455"/>
    </location>
</feature>
<feature type="mutagenesis site" description="No effect." evidence="6">
    <original>V</original>
    <variation>A</variation>
    <location>
        <position position="459"/>
    </location>
</feature>
<feature type="mutagenesis site" description="Impairs DNA base J biosynthesis." evidence="4">
    <original>K</original>
    <variation>A</variation>
    <location>
        <position position="550"/>
    </location>
</feature>
<feature type="mutagenesis site" description="Impairs DNA base J biosynthesis." evidence="4">
    <original>DE</original>
    <variation>AA</variation>
    <location>
        <begin position="657"/>
        <end position="658"/>
    </location>
</feature>
<keyword id="KW-0067">ATP-binding</keyword>
<keyword id="KW-0223">Dioxygenase</keyword>
<keyword id="KW-0238">DNA-binding</keyword>
<keyword id="KW-0347">Helicase</keyword>
<keyword id="KW-0378">Hydrolase</keyword>
<keyword id="KW-0408">Iron</keyword>
<keyword id="KW-0479">Metal-binding</keyword>
<keyword id="KW-0547">Nucleotide-binding</keyword>
<keyword id="KW-0539">Nucleus</keyword>
<keyword id="KW-0560">Oxidoreductase</keyword>
<keyword id="KW-1185">Reference proteome</keyword>
<sequence>MPMFMDGASQVLQQVLQTVLVTSEPAIVIPGSFLGELDVIVDEAKNHGMKLVSIPKGGITILPPIPMSESSLTRLCKDYYGLKTDAERLALFSNLEETFPTAPGVSLPCRLLYHPRDYICRIVHLCAELVTASDEEYQKAYDIVPLLHIRPVQNVCEELRRQFRAGALTQRLPLGQRVDVQFKRTVVHLDGSMDPFPRNAAEAAVNIAPVALDAVDDIYEGFDVTGTEVVDIPTGKVSEYLSEKDFELVTEDSVLLDPTGKRVQAIFIRGGIDKDICRRAAADVEGVATKQNMRRLTNGGVRNPDTGILGYYDYLNNPTKRKCRMTEFTRRNWGKIIGPCGELLQLLDQLYKENAPDHYELQRRVIPPEYMLFNTVFSTVSVNKNFRTAVHRDKGDFRGGLTALCVLDGNYEGCYLALKSARKAFCLQVGDVLFFDSSLEHGNTEVHNREGSWRRISIVCYLRCGLMSHTCETERSMRLRNQIMSDRLHADSADSVVNLNGVTGHLPPLCIPFKIAKTLSLTQHAALRFVSRRIKEGDGCVLALTMGLGKTLVSLTICYSYIYNNGPCDILIVAPKTLLQHWMQEAKKWKDYGLVFPGFIVLNNVDSSSFEDDLSNYEQQGTTTNPKKSYVFVINPGYIKSFLSRVKGFRPALIVVDEGHCISSKESKLREVLDSLYCSARVVLTGTPVQNNAEELYRLVGWVDDKVHSTLPQRDFNEFSNSINRYVNGDDSAFCDALFAQRYIHEWMSPYVFTVMKVDLPPLHDYIIICNFSAVQQKMFEERIKVDATDNLLCLKASEHRPYHLSTHPLCFLGFLTGIWRTGQVDIEEEPGEFEELGTYRLSRDDDALAKDCSSLLENGKLADFVALSGKLTALISILHSIFEKMEKAVIFSQYIGSQDFIARTLTAYKISVVTIRGKDCQQRRRRVVEMFRDDKNVLCLVVSTQIGAYGLDLTAANHVILWDTWWNPQVESQAIARCYRQNQSKAVIAYKLASGFEDATVLKAQARKRALFKCLINEETSQVVPGHDLVDYTSSEEDDDRRHLWETLKTCTLEGGKPAVTKIIRNIDTVKSERWI</sequence>
<reference key="1">
    <citation type="journal article" date="2005" name="Science">
        <title>The genome of the African trypanosome Trypanosoma brucei.</title>
        <authorList>
            <person name="Berriman M."/>
            <person name="Ghedin E."/>
            <person name="Hertz-Fowler C."/>
            <person name="Blandin G."/>
            <person name="Renauld H."/>
            <person name="Bartholomeu D.C."/>
            <person name="Lennard N.J."/>
            <person name="Caler E."/>
            <person name="Hamlin N.E."/>
            <person name="Haas B."/>
            <person name="Bohme U."/>
            <person name="Hannick L."/>
            <person name="Aslett M.A."/>
            <person name="Shallom J."/>
            <person name="Marcello L."/>
            <person name="Hou L."/>
            <person name="Wickstead B."/>
            <person name="Alsmark U.C.M."/>
            <person name="Arrowsmith C."/>
            <person name="Atkin R.J."/>
            <person name="Barron A.J."/>
            <person name="Bringaud F."/>
            <person name="Brooks K."/>
            <person name="Carrington M."/>
            <person name="Cherevach I."/>
            <person name="Chillingworth T.J."/>
            <person name="Churcher C."/>
            <person name="Clark L.N."/>
            <person name="Corton C.H."/>
            <person name="Cronin A."/>
            <person name="Davies R.M."/>
            <person name="Doggett J."/>
            <person name="Djikeng A."/>
            <person name="Feldblyum T."/>
            <person name="Field M.C."/>
            <person name="Fraser A."/>
            <person name="Goodhead I."/>
            <person name="Hance Z."/>
            <person name="Harper D."/>
            <person name="Harris B.R."/>
            <person name="Hauser H."/>
            <person name="Hostetler J."/>
            <person name="Ivens A."/>
            <person name="Jagels K."/>
            <person name="Johnson D."/>
            <person name="Johnson J."/>
            <person name="Jones K."/>
            <person name="Kerhornou A.X."/>
            <person name="Koo H."/>
            <person name="Larke N."/>
            <person name="Landfear S."/>
            <person name="Larkin C."/>
            <person name="Leech V."/>
            <person name="Line A."/>
            <person name="Lord A."/>
            <person name="Macleod A."/>
            <person name="Mooney P.J."/>
            <person name="Moule S."/>
            <person name="Martin D.M."/>
            <person name="Morgan G.W."/>
            <person name="Mungall K."/>
            <person name="Norbertczak H."/>
            <person name="Ormond D."/>
            <person name="Pai G."/>
            <person name="Peacock C.S."/>
            <person name="Peterson J."/>
            <person name="Quail M.A."/>
            <person name="Rabbinowitsch E."/>
            <person name="Rajandream M.A."/>
            <person name="Reitter C."/>
            <person name="Salzberg S.L."/>
            <person name="Sanders M."/>
            <person name="Schobel S."/>
            <person name="Sharp S."/>
            <person name="Simmonds M."/>
            <person name="Simpson A.J."/>
            <person name="Tallon L."/>
            <person name="Turner C.M."/>
            <person name="Tait A."/>
            <person name="Tivey A.R."/>
            <person name="Van Aken S."/>
            <person name="Walker D."/>
            <person name="Wanless D."/>
            <person name="Wang S."/>
            <person name="White B."/>
            <person name="White O."/>
            <person name="Whitehead S."/>
            <person name="Woodward J."/>
            <person name="Wortman J."/>
            <person name="Adams M.D."/>
            <person name="Embley T.M."/>
            <person name="Gull K."/>
            <person name="Ullu E."/>
            <person name="Barry J.D."/>
            <person name="Fairlamb A.H."/>
            <person name="Opperdoes F."/>
            <person name="Barrell B.G."/>
            <person name="Donelson J.E."/>
            <person name="Hall N."/>
            <person name="Fraser C.M."/>
            <person name="Melville S.E."/>
            <person name="El-Sayed N.M.A."/>
        </authorList>
    </citation>
    <scope>NUCLEOTIDE SEQUENCE [LARGE SCALE GENOMIC DNA]</scope>
    <source>
        <strain evidence="10">927/4 GUTat10.1</strain>
    </source>
</reference>
<reference key="2">
    <citation type="journal article" date="2005" name="Mol. Cell">
        <title>Regulation of trypanosome DNA glycosylation by a SWI2/SNF2-like protein.</title>
        <authorList>
            <person name="DiPaolo C."/>
            <person name="Kieft R."/>
            <person name="Cross M."/>
            <person name="Sabatini R."/>
        </authorList>
    </citation>
    <scope>FUNCTION</scope>
    <scope>SUBCELLULAR LOCATION</scope>
    <scope>DEVELOPMENTAL STAGE</scope>
    <scope>MUTAGENESIS OF LYS-550 AND 657-ASP-GLU-658</scope>
</reference>
<reference key="3">
    <citation type="journal article" date="2007" name="Mol. Biochem. Parasitol.">
        <title>JBP2, a SWI2/SNF2-like protein, regulates de novo telomeric DNA glycosylation in bloodstream form Trypanosoma brucei.</title>
        <authorList>
            <person name="Kieft R."/>
            <person name="Brand V."/>
            <person name="Ekanayake D.K."/>
            <person name="Sweeney K."/>
            <person name="DiPaolo C."/>
            <person name="Reznikoff W.S."/>
            <person name="Sabatini R."/>
        </authorList>
    </citation>
    <scope>DISRUPTION PHENOTYPE</scope>
</reference>
<reference key="4">
    <citation type="journal article" date="2009" name="Nucleic Acids Res.">
        <title>JBP1 and JBP2 are two distinct thymidine hydroxylases involved in J biosynthesis in genomic DNA of African trypanosomes.</title>
        <authorList>
            <person name="Cliffe L.J."/>
            <person name="Kieft R."/>
            <person name="Southern T."/>
            <person name="Birkeland S.R."/>
            <person name="Marshall M."/>
            <person name="Sweeney K."/>
            <person name="Sabatini R."/>
        </authorList>
    </citation>
    <scope>FUNCTION</scope>
    <scope>SUBCELLULAR LOCATION</scope>
    <scope>MUTAGENESIS OF HIS-391; ASP-393; HIS-441; ARG-455 AND VAL-459</scope>
</reference>
<evidence type="ECO:0000250" key="1">
    <source>
        <dbReference type="UniProtKB" id="Q6N021"/>
    </source>
</evidence>
<evidence type="ECO:0000255" key="2">
    <source>
        <dbReference type="PROSITE-ProRule" id="PRU00541"/>
    </source>
</evidence>
<evidence type="ECO:0000255" key="3">
    <source>
        <dbReference type="PROSITE-ProRule" id="PRU00542"/>
    </source>
</evidence>
<evidence type="ECO:0000269" key="4">
    <source>
    </source>
</evidence>
<evidence type="ECO:0000269" key="5">
    <source>
    </source>
</evidence>
<evidence type="ECO:0000269" key="6">
    <source>
    </source>
</evidence>
<evidence type="ECO:0000305" key="7"/>
<evidence type="ECO:0000305" key="8">
    <source>
    </source>
</evidence>
<evidence type="ECO:0000305" key="9">
    <source>
    </source>
</evidence>
<evidence type="ECO:0000312" key="10">
    <source>
        <dbReference type="Proteomes" id="UP000008524"/>
    </source>
</evidence>
<dbReference type="EC" id="3.6.4.12" evidence="8 9"/>
<dbReference type="EC" id="1.14.11.6" evidence="8 9"/>
<dbReference type="EMBL" id="AC159421">
    <property type="protein sequence ID" value="AAX69788.1"/>
    <property type="molecule type" value="Genomic_DNA"/>
</dbReference>
<dbReference type="RefSeq" id="XP_846088.1">
    <property type="nucleotide sequence ID" value="XM_840995.1"/>
</dbReference>
<dbReference type="SMR" id="Q57X81"/>
<dbReference type="STRING" id="185431.Q57X81"/>
<dbReference type="PaxDb" id="5691-AAZ12529"/>
<dbReference type="GeneID" id="3658676"/>
<dbReference type="KEGG" id="tbr:Tb927.7.4650"/>
<dbReference type="VEuPathDB" id="TriTrypDB:Tb11.v5.0150"/>
<dbReference type="VEuPathDB" id="TriTrypDB:Tb927.7.4650"/>
<dbReference type="eggNOG" id="KOG1015">
    <property type="taxonomic scope" value="Eukaryota"/>
</dbReference>
<dbReference type="InParanoid" id="Q57X81"/>
<dbReference type="OMA" id="HKCRETE"/>
<dbReference type="OrthoDB" id="2020972at2759"/>
<dbReference type="BRENDA" id="1.14.11.6">
    <property type="organism ID" value="6519"/>
</dbReference>
<dbReference type="Proteomes" id="UP000008524">
    <property type="component" value="Chromosome 7"/>
</dbReference>
<dbReference type="GO" id="GO:0005634">
    <property type="term" value="C:nucleus"/>
    <property type="evidence" value="ECO:0000314"/>
    <property type="project" value="UniProtKB"/>
</dbReference>
<dbReference type="GO" id="GO:0005524">
    <property type="term" value="F:ATP binding"/>
    <property type="evidence" value="ECO:0007669"/>
    <property type="project" value="UniProtKB-KW"/>
</dbReference>
<dbReference type="GO" id="GO:0016887">
    <property type="term" value="F:ATP hydrolysis activity"/>
    <property type="evidence" value="ECO:0007669"/>
    <property type="project" value="RHEA"/>
</dbReference>
<dbReference type="GO" id="GO:0003677">
    <property type="term" value="F:DNA binding"/>
    <property type="evidence" value="ECO:0007669"/>
    <property type="project" value="UniProtKB-KW"/>
</dbReference>
<dbReference type="GO" id="GO:0015616">
    <property type="term" value="F:DNA translocase activity"/>
    <property type="evidence" value="ECO:0000318"/>
    <property type="project" value="GO_Central"/>
</dbReference>
<dbReference type="GO" id="GO:0008198">
    <property type="term" value="F:ferrous iron binding"/>
    <property type="evidence" value="ECO:0000266"/>
    <property type="project" value="GeneDB"/>
</dbReference>
<dbReference type="GO" id="GO:0004386">
    <property type="term" value="F:helicase activity"/>
    <property type="evidence" value="ECO:0007669"/>
    <property type="project" value="UniProtKB-KW"/>
</dbReference>
<dbReference type="GO" id="GO:0050341">
    <property type="term" value="F:thymine dioxygenase activity"/>
    <property type="evidence" value="ECO:0000315"/>
    <property type="project" value="UniProtKB"/>
</dbReference>
<dbReference type="GO" id="GO:0070580">
    <property type="term" value="P:base J metabolic process"/>
    <property type="evidence" value="ECO:0000315"/>
    <property type="project" value="UniProtKB"/>
</dbReference>
<dbReference type="GO" id="GO:0000724">
    <property type="term" value="P:double-strand break repair via homologous recombination"/>
    <property type="evidence" value="ECO:0000318"/>
    <property type="project" value="GO_Central"/>
</dbReference>
<dbReference type="GO" id="GO:0007131">
    <property type="term" value="P:reciprocal meiotic recombination"/>
    <property type="evidence" value="ECO:0000318"/>
    <property type="project" value="GO_Central"/>
</dbReference>
<dbReference type="CDD" id="cd17919">
    <property type="entry name" value="DEXHc_Snf"/>
    <property type="match status" value="1"/>
</dbReference>
<dbReference type="CDD" id="cd20332">
    <property type="entry name" value="JBP"/>
    <property type="match status" value="1"/>
</dbReference>
<dbReference type="CDD" id="cd18793">
    <property type="entry name" value="SF2_C_SNF"/>
    <property type="match status" value="1"/>
</dbReference>
<dbReference type="FunFam" id="3.40.50.10810:FF:000072">
    <property type="entry name" value="Bifunctional helicase and thymine dioxygenase JBP2"/>
    <property type="match status" value="1"/>
</dbReference>
<dbReference type="Gene3D" id="3.60.130.30">
    <property type="match status" value="1"/>
</dbReference>
<dbReference type="Gene3D" id="3.40.50.300">
    <property type="entry name" value="P-loop containing nucleotide triphosphate hydrolases"/>
    <property type="match status" value="1"/>
</dbReference>
<dbReference type="Gene3D" id="3.40.50.10810">
    <property type="entry name" value="Tandem AAA-ATPase domain"/>
    <property type="match status" value="1"/>
</dbReference>
<dbReference type="InterPro" id="IPR024779">
    <property type="entry name" value="2OGFeDO_JBP1/TET_oxygenase_dom"/>
</dbReference>
<dbReference type="InterPro" id="IPR014001">
    <property type="entry name" value="Helicase_ATP-bd"/>
</dbReference>
<dbReference type="InterPro" id="IPR001650">
    <property type="entry name" value="Helicase_C-like"/>
</dbReference>
<dbReference type="InterPro" id="IPR027417">
    <property type="entry name" value="P-loop_NTPase"/>
</dbReference>
<dbReference type="InterPro" id="IPR038718">
    <property type="entry name" value="SNF2-like_sf"/>
</dbReference>
<dbReference type="InterPro" id="IPR049730">
    <property type="entry name" value="SNF2/RAD54-like_C"/>
</dbReference>
<dbReference type="InterPro" id="IPR000330">
    <property type="entry name" value="SNF2_N"/>
</dbReference>
<dbReference type="InterPro" id="IPR050496">
    <property type="entry name" value="SNF2_RAD54_helicase_repair"/>
</dbReference>
<dbReference type="PANTHER" id="PTHR45629:SF7">
    <property type="entry name" value="DNA EXCISION REPAIR PROTEIN ERCC-6-RELATED"/>
    <property type="match status" value="1"/>
</dbReference>
<dbReference type="PANTHER" id="PTHR45629">
    <property type="entry name" value="SNF2/RAD54 FAMILY MEMBER"/>
    <property type="match status" value="1"/>
</dbReference>
<dbReference type="Pfam" id="PF00271">
    <property type="entry name" value="Helicase_C"/>
    <property type="match status" value="1"/>
</dbReference>
<dbReference type="Pfam" id="PF00176">
    <property type="entry name" value="SNF2-rel_dom"/>
    <property type="match status" value="1"/>
</dbReference>
<dbReference type="Pfam" id="PF12851">
    <property type="entry name" value="Tet_JBP"/>
    <property type="match status" value="1"/>
</dbReference>
<dbReference type="SMART" id="SM00487">
    <property type="entry name" value="DEXDc"/>
    <property type="match status" value="1"/>
</dbReference>
<dbReference type="SMART" id="SM00490">
    <property type="entry name" value="HELICc"/>
    <property type="match status" value="1"/>
</dbReference>
<dbReference type="SUPFAM" id="SSF51197">
    <property type="entry name" value="Clavaminate synthase-like"/>
    <property type="match status" value="1"/>
</dbReference>
<dbReference type="SUPFAM" id="SSF52540">
    <property type="entry name" value="P-loop containing nucleoside triphosphate hydrolases"/>
    <property type="match status" value="2"/>
</dbReference>
<dbReference type="PROSITE" id="PS51192">
    <property type="entry name" value="HELICASE_ATP_BIND_1"/>
    <property type="match status" value="1"/>
</dbReference>
<dbReference type="PROSITE" id="PS51194">
    <property type="entry name" value="HELICASE_CTER"/>
    <property type="match status" value="1"/>
</dbReference>
<gene>
    <name type="primary">JBP2</name>
    <name type="ORF">Tb927.7.4650</name>
</gene>
<name>JBP2_TRYB2</name>
<comment type="function">
    <text evidence="4 6">Dioxygenase that catalyzes the first step of DNA base J (beta-d-glucosyl-HOMedU) biosynthesis by converting thymine to 5-hydroxymethyluracil (HOMedU). DNA base J is a hypermodified thymidine residue found in the genome of kinetoplastid parasites, which is localized primarily to repetitive DNA, namely the telomeres, and is implicated in the regulation of antigenic variation. Probably also acts as a DNA helicase. Recognizes and binds specific regions of the genome, hydrolyzes ATP and allows the DNA base J de novo synthesis. Involved in initial synthesis of DNA base J, JBP1 being able to act via the basal level of DNA base J and propagate further synthesis. In contrast to JBP1, it does not specifically bind DNA base J, however it binds chromatin.</text>
</comment>
<comment type="catalytic activity">
    <reaction evidence="8 9">
        <text>ATP + H2O = ADP + phosphate + H(+)</text>
        <dbReference type="Rhea" id="RHEA:13065"/>
        <dbReference type="ChEBI" id="CHEBI:15377"/>
        <dbReference type="ChEBI" id="CHEBI:15378"/>
        <dbReference type="ChEBI" id="CHEBI:30616"/>
        <dbReference type="ChEBI" id="CHEBI:43474"/>
        <dbReference type="ChEBI" id="CHEBI:456216"/>
        <dbReference type="EC" id="3.6.4.12"/>
    </reaction>
</comment>
<comment type="catalytic activity">
    <reaction evidence="8 9">
        <text>thymine + 2-oxoglutarate + O2 = 5-hydroxymethyluracil + succinate + CO2</text>
        <dbReference type="Rhea" id="RHEA:10316"/>
        <dbReference type="ChEBI" id="CHEBI:15379"/>
        <dbReference type="ChEBI" id="CHEBI:16526"/>
        <dbReference type="ChEBI" id="CHEBI:16810"/>
        <dbReference type="ChEBI" id="CHEBI:16964"/>
        <dbReference type="ChEBI" id="CHEBI:17821"/>
        <dbReference type="ChEBI" id="CHEBI:30031"/>
        <dbReference type="EC" id="1.14.11.6"/>
    </reaction>
</comment>
<comment type="cofactor">
    <cofactor evidence="1">
        <name>Fe(2+)</name>
        <dbReference type="ChEBI" id="CHEBI:29033"/>
    </cofactor>
    <text evidence="1">Binds 1 Fe(2+) ion per subunit.</text>
</comment>
<comment type="subcellular location">
    <subcellularLocation>
        <location evidence="4 6">Nucleus</location>
    </subcellularLocation>
</comment>
<comment type="developmental stage">
    <text evidence="4">Expressed in bloodstream form.</text>
</comment>
<comment type="disruption phenotype">
    <text evidence="5">The genome contains reduced level of DNA base J in the DNA. Cells lacking both JBP1 and JBP2 show a complete absence of base J.</text>
</comment>
<comment type="similarity">
    <text evidence="7">In the C-terminal section; belongs to the SNF2/RAD54 helicase family.</text>
</comment>
<comment type="similarity">
    <text evidence="7">In the N-terminal section; belongs to the TET family. JBP2 subfamily.</text>
</comment>
<protein>
    <recommendedName>
        <fullName>Bifunctional helicase and thymine dioxygenase JBP2</fullName>
    </recommendedName>
    <alternativeName>
        <fullName>J-binding protein 2</fullName>
        <shortName>TbJBP2</shortName>
    </alternativeName>
    <domain>
        <recommendedName>
            <fullName>Probable DNA helicase JBP2</fullName>
            <ecNumber evidence="8 9">3.6.4.12</ecNumber>
        </recommendedName>
    </domain>
    <domain>
        <recommendedName>
            <fullName>Thymine dioxygenase JBP2</fullName>
            <ecNumber evidence="8 9">1.14.11.6</ecNumber>
        </recommendedName>
    </domain>
</protein>
<organism>
    <name type="scientific">Trypanosoma brucei brucei (strain 927/4 GUTat10.1)</name>
    <dbReference type="NCBI Taxonomy" id="185431"/>
    <lineage>
        <taxon>Eukaryota</taxon>
        <taxon>Discoba</taxon>
        <taxon>Euglenozoa</taxon>
        <taxon>Kinetoplastea</taxon>
        <taxon>Metakinetoplastina</taxon>
        <taxon>Trypanosomatida</taxon>
        <taxon>Trypanosomatidae</taxon>
        <taxon>Trypanosoma</taxon>
    </lineage>
</organism>
<proteinExistence type="evidence at protein level"/>
<accession>Q57X81</accession>